<accession>Q9H069</accession>
<accession>A8KAE6</accession>
<accession>Q86SF9</accession>
<accession>Q86W73</accession>
<accession>Q8IWG0</accession>
<feature type="chain" id="PRO_0000227774" description="Dynein regulatory complex subunit 3">
    <location>
        <begin position="1"/>
        <end position="523"/>
    </location>
</feature>
<feature type="repeat" description="LRR 1">
    <location>
        <begin position="44"/>
        <end position="65"/>
    </location>
</feature>
<feature type="repeat" description="LRR 2">
    <location>
        <begin position="66"/>
        <end position="87"/>
    </location>
</feature>
<feature type="repeat" description="LRR 3">
    <location>
        <begin position="88"/>
        <end position="109"/>
    </location>
</feature>
<feature type="repeat" description="LRR 4">
    <location>
        <begin position="110"/>
        <end position="131"/>
    </location>
</feature>
<feature type="repeat" description="LRR 5">
    <location>
        <begin position="132"/>
        <end position="153"/>
    </location>
</feature>
<feature type="domain" description="LRRCT">
    <location>
        <begin position="166"/>
        <end position="204"/>
    </location>
</feature>
<feature type="coiled-coil region" evidence="3">
    <location>
        <begin position="208"/>
        <end position="242"/>
    </location>
</feature>
<feature type="coiled-coil region" evidence="3">
    <location>
        <begin position="366"/>
        <end position="391"/>
    </location>
</feature>
<feature type="splice variant" id="VSP_017578" description="In isoform 2." evidence="8 9">
    <original>LFVDKDTIVNAVGAS</original>
    <variation>GRFQKFNYVEASGTF</variation>
    <location>
        <begin position="443"/>
        <end position="457"/>
    </location>
</feature>
<feature type="splice variant" id="VSP_017579" description="In isoform 2." evidence="8 9">
    <location>
        <begin position="458"/>
        <end position="523"/>
    </location>
</feature>
<feature type="sequence variant" id="VAR_051120" description="In dbSNP:rs8072048.">
    <original>R</original>
    <variation>Q</variation>
    <location>
        <position position="159"/>
    </location>
</feature>
<feature type="sequence variant" id="VAR_025625" description="In dbSNP:rs4584886." evidence="4">
    <original>R</original>
    <variation>W</variation>
    <location>
        <position position="191"/>
    </location>
</feature>
<feature type="sequence variant" id="VAR_051121" description="In dbSNP:rs11656629.">
    <original>A</original>
    <variation>V</variation>
    <location>
        <position position="364"/>
    </location>
</feature>
<evidence type="ECO:0000250" key="1">
    <source>
        <dbReference type="UniProtKB" id="A8IVX2"/>
    </source>
</evidence>
<evidence type="ECO:0000250" key="2">
    <source>
        <dbReference type="UniProtKB" id="Q9D5E4"/>
    </source>
</evidence>
<evidence type="ECO:0000255" key="3"/>
<evidence type="ECO:0000269" key="4">
    <source>
    </source>
</evidence>
<evidence type="ECO:0000269" key="5">
    <source>
    </source>
</evidence>
<evidence type="ECO:0000269" key="6">
    <source>
    </source>
</evidence>
<evidence type="ECO:0000269" key="7">
    <source>
    </source>
</evidence>
<evidence type="ECO:0000303" key="8">
    <source>
    </source>
</evidence>
<evidence type="ECO:0000303" key="9">
    <source>
    </source>
</evidence>
<evidence type="ECO:0000305" key="10"/>
<dbReference type="EMBL" id="AL136926">
    <property type="protein sequence ID" value="CAB66860.2"/>
    <property type="molecule type" value="mRNA"/>
</dbReference>
<dbReference type="EMBL" id="AK293011">
    <property type="protein sequence ID" value="BAF85700.1"/>
    <property type="molecule type" value="mRNA"/>
</dbReference>
<dbReference type="EMBL" id="BC040276">
    <property type="protein sequence ID" value="AAH40276.1"/>
    <property type="molecule type" value="mRNA"/>
</dbReference>
<dbReference type="EMBL" id="BC047873">
    <property type="protein sequence ID" value="AAH47873.1"/>
    <property type="molecule type" value="mRNA"/>
</dbReference>
<dbReference type="EMBL" id="BC050419">
    <property type="protein sequence ID" value="AAH50419.1"/>
    <property type="molecule type" value="mRNA"/>
</dbReference>
<dbReference type="EMBL" id="BC050665">
    <property type="protein sequence ID" value="AAH50665.1"/>
    <property type="molecule type" value="mRNA"/>
</dbReference>
<dbReference type="CCDS" id="CCDS45622.1">
    <molecule id="Q9H069-1"/>
</dbReference>
<dbReference type="CCDS" id="CCDS45623.1">
    <molecule id="Q9H069-2"/>
</dbReference>
<dbReference type="RefSeq" id="NP_001123562.1">
    <molecule id="Q9H069-1"/>
    <property type="nucleotide sequence ID" value="NM_001130090.1"/>
</dbReference>
<dbReference type="RefSeq" id="NP_001123563.1">
    <molecule id="Q9H069-2"/>
    <property type="nucleotide sequence ID" value="NM_001130091.2"/>
</dbReference>
<dbReference type="RefSeq" id="NP_001123564.1">
    <molecule id="Q9H069-2"/>
    <property type="nucleotide sequence ID" value="NM_001130092.2"/>
</dbReference>
<dbReference type="RefSeq" id="NP_112584.3">
    <molecule id="Q9H069-1"/>
    <property type="nucleotide sequence ID" value="NM_031294.3"/>
</dbReference>
<dbReference type="PDB" id="8J07">
    <property type="method" value="EM"/>
    <property type="resolution" value="4.10 A"/>
    <property type="chains" value="3=1-523"/>
</dbReference>
<dbReference type="PDBsum" id="8J07"/>
<dbReference type="EMDB" id="EMD-35888"/>
<dbReference type="SMR" id="Q9H069"/>
<dbReference type="BioGRID" id="123652">
    <property type="interactions" value="22"/>
</dbReference>
<dbReference type="ComplexPortal" id="CPX-8086">
    <property type="entry name" value="Nexin-dynein regulatory complex"/>
</dbReference>
<dbReference type="FunCoup" id="Q9H069">
    <property type="interactions" value="133"/>
</dbReference>
<dbReference type="IntAct" id="Q9H069">
    <property type="interactions" value="20"/>
</dbReference>
<dbReference type="STRING" id="9606.ENSP00000382140"/>
<dbReference type="GlyCosmos" id="Q9H069">
    <property type="glycosylation" value="1 site, 2 glycans"/>
</dbReference>
<dbReference type="GlyGen" id="Q9H069">
    <property type="glycosylation" value="2 sites, 2 O-linked glycans (2 sites)"/>
</dbReference>
<dbReference type="iPTMnet" id="Q9H069"/>
<dbReference type="PhosphoSitePlus" id="Q9H069"/>
<dbReference type="BioMuta" id="DRC3"/>
<dbReference type="DMDM" id="74761374"/>
<dbReference type="MassIVE" id="Q9H069"/>
<dbReference type="PaxDb" id="9606-ENSP00000382140"/>
<dbReference type="PeptideAtlas" id="Q9H069"/>
<dbReference type="ProteomicsDB" id="80207">
    <molecule id="Q9H069-1"/>
</dbReference>
<dbReference type="ProteomicsDB" id="80208">
    <molecule id="Q9H069-2"/>
</dbReference>
<dbReference type="Antibodypedia" id="25546">
    <property type="antibodies" value="28 antibodies from 11 providers"/>
</dbReference>
<dbReference type="DNASU" id="83450"/>
<dbReference type="Ensembl" id="ENST00000399182.5">
    <molecule id="Q9H069-2"/>
    <property type="protein sequence ID" value="ENSP00000382136.1"/>
    <property type="gene ID" value="ENSG00000171962.19"/>
</dbReference>
<dbReference type="Ensembl" id="ENST00000399187.6">
    <molecule id="Q9H069-1"/>
    <property type="protein sequence ID" value="ENSP00000382140.1"/>
    <property type="gene ID" value="ENSG00000171962.19"/>
</dbReference>
<dbReference type="Ensembl" id="ENST00000584166.5">
    <molecule id="Q9H069-2"/>
    <property type="protein sequence ID" value="ENSP00000462661.1"/>
    <property type="gene ID" value="ENSG00000171962.19"/>
</dbReference>
<dbReference type="GeneID" id="83450"/>
<dbReference type="KEGG" id="hsa:83450"/>
<dbReference type="MANE-Select" id="ENST00000399187.6">
    <property type="protein sequence ID" value="ENSP00000382140.1"/>
    <property type="RefSeq nucleotide sequence ID" value="NM_031294.4"/>
    <property type="RefSeq protein sequence ID" value="NP_112584.3"/>
</dbReference>
<dbReference type="UCSC" id="uc032ewk.2">
    <molecule id="Q9H069-1"/>
    <property type="organism name" value="human"/>
</dbReference>
<dbReference type="AGR" id="HGNC:25384"/>
<dbReference type="CTD" id="83450"/>
<dbReference type="DisGeNET" id="83450"/>
<dbReference type="GeneCards" id="DRC3"/>
<dbReference type="HGNC" id="HGNC:25384">
    <property type="gene designation" value="DRC3"/>
</dbReference>
<dbReference type="HPA" id="ENSG00000171962">
    <property type="expression patterns" value="Tissue enhanced (choroid plexus, fallopian tube)"/>
</dbReference>
<dbReference type="MIM" id="618758">
    <property type="type" value="gene"/>
</dbReference>
<dbReference type="neXtProt" id="NX_Q9H069"/>
<dbReference type="OpenTargets" id="ENSG00000171962"/>
<dbReference type="PharmGKB" id="PA142671508"/>
<dbReference type="VEuPathDB" id="HostDB:ENSG00000171962"/>
<dbReference type="eggNOG" id="KOG0531">
    <property type="taxonomic scope" value="Eukaryota"/>
</dbReference>
<dbReference type="GeneTree" id="ENSGT00940000159298"/>
<dbReference type="HOGENOM" id="CLU_026827_0_0_1"/>
<dbReference type="InParanoid" id="Q9H069"/>
<dbReference type="OMA" id="SFMEMMT"/>
<dbReference type="OrthoDB" id="27917at2759"/>
<dbReference type="PAN-GO" id="Q9H069">
    <property type="GO annotations" value="1 GO annotation based on evolutionary models"/>
</dbReference>
<dbReference type="PhylomeDB" id="Q9H069"/>
<dbReference type="TreeFam" id="TF323974"/>
<dbReference type="PathwayCommons" id="Q9H069"/>
<dbReference type="SignaLink" id="Q9H069"/>
<dbReference type="BioGRID-ORCS" id="83450">
    <property type="hits" value="11 hits in 1138 CRISPR screens"/>
</dbReference>
<dbReference type="ChiTaRS" id="DRC3">
    <property type="organism name" value="human"/>
</dbReference>
<dbReference type="GeneWiki" id="LRRC48"/>
<dbReference type="GenomeRNAi" id="83450"/>
<dbReference type="Pharos" id="Q9H069">
    <property type="development level" value="Tdark"/>
</dbReference>
<dbReference type="PRO" id="PR:Q9H069"/>
<dbReference type="Proteomes" id="UP000005640">
    <property type="component" value="Chromosome 17"/>
</dbReference>
<dbReference type="RNAct" id="Q9H069">
    <property type="molecule type" value="protein"/>
</dbReference>
<dbReference type="Bgee" id="ENSG00000171962">
    <property type="expression patterns" value="Expressed in right uterine tube and 122 other cell types or tissues"/>
</dbReference>
<dbReference type="ExpressionAtlas" id="Q9H069">
    <property type="expression patterns" value="baseline and differential"/>
</dbReference>
<dbReference type="GO" id="GO:0005930">
    <property type="term" value="C:axoneme"/>
    <property type="evidence" value="ECO:0000314"/>
    <property type="project" value="MGI"/>
</dbReference>
<dbReference type="GO" id="GO:0005929">
    <property type="term" value="C:cilium"/>
    <property type="evidence" value="ECO:0000318"/>
    <property type="project" value="GO_Central"/>
</dbReference>
<dbReference type="GO" id="GO:0005737">
    <property type="term" value="C:cytoplasm"/>
    <property type="evidence" value="ECO:0000314"/>
    <property type="project" value="LIFEdb"/>
</dbReference>
<dbReference type="GO" id="GO:0036126">
    <property type="term" value="C:sperm flagellum"/>
    <property type="evidence" value="ECO:0000250"/>
    <property type="project" value="UniProtKB"/>
</dbReference>
<dbReference type="FunFam" id="3.80.10.10:FF:000292">
    <property type="entry name" value="Dynein regulatory complex subunit 3"/>
    <property type="match status" value="1"/>
</dbReference>
<dbReference type="Gene3D" id="3.80.10.10">
    <property type="entry name" value="Ribonuclease Inhibitor"/>
    <property type="match status" value="1"/>
</dbReference>
<dbReference type="InterPro" id="IPR050576">
    <property type="entry name" value="Cilia_flagella_integrity"/>
</dbReference>
<dbReference type="InterPro" id="IPR001611">
    <property type="entry name" value="Leu-rich_rpt"/>
</dbReference>
<dbReference type="InterPro" id="IPR032675">
    <property type="entry name" value="LRR_dom_sf"/>
</dbReference>
<dbReference type="PANTHER" id="PTHR45973:SF12">
    <property type="entry name" value="DYNEIN REGULATORY COMPLEX SUBUNIT 3"/>
    <property type="match status" value="1"/>
</dbReference>
<dbReference type="PANTHER" id="PTHR45973">
    <property type="entry name" value="PROTEIN PHOSPHATASE 1 REGULATORY SUBUNIT SDS22-RELATED"/>
    <property type="match status" value="1"/>
</dbReference>
<dbReference type="Pfam" id="PF14580">
    <property type="entry name" value="LRR_9"/>
    <property type="match status" value="1"/>
</dbReference>
<dbReference type="SMART" id="SM00365">
    <property type="entry name" value="LRR_SD22"/>
    <property type="match status" value="4"/>
</dbReference>
<dbReference type="SUPFAM" id="SSF52058">
    <property type="entry name" value="L domain-like"/>
    <property type="match status" value="1"/>
</dbReference>
<dbReference type="PROSITE" id="PS51450">
    <property type="entry name" value="LRR"/>
    <property type="match status" value="5"/>
</dbReference>
<sequence length="523" mass="61054">MNQPCNSMEPRVMDDDMLKLAVGDQGPQEEAGQLAKQEGILFKDVLSLQLDFRNILRIDNLWQFENLRKLQLDNNIIEKIEGLENLAHLVWLDLSFNNIETIEGLDTLVNLEDLSLFNNRISKIDSLDALVKLQVLSLGNNRIDNMMNIIYLRRFKCLRTLSLSRNPISEAEDYKMFICAYLPDLMYLDYRRIDDHTKKLAEAKHQYSIDELKHQENLMQAQLEDEQAQREELEKHKTAFVEHLNGSFLFDSMYAEDSEGNNLSYLPGVGELLETYKDKFVIICVNIFEYGLKQQEKRKTELDTFSECVREAIQENQEQGKRKIAKFEEKHLSSLSAIREELELPNIEKMILECSADISELFDALMTLEMQLVEQLEETINMFERNIVDMVGLFIENVQSLMAQCRDLENHHHEKLLEISISTLEKIVEGDLDEDLPNDLRALFVDKDTIVNAVGASHDIHLLKIDNREDELVTRINSWCTRLIDRIHKDEIMRNRKRVKEINQYIDHMQSELDNLECGDILD</sequence>
<reference key="1">
    <citation type="journal article" date="2001" name="Genome Res.">
        <title>Towards a catalog of human genes and proteins: sequencing and analysis of 500 novel complete protein coding human cDNAs.</title>
        <authorList>
            <person name="Wiemann S."/>
            <person name="Weil B."/>
            <person name="Wellenreuther R."/>
            <person name="Gassenhuber J."/>
            <person name="Glassl S."/>
            <person name="Ansorge W."/>
            <person name="Boecher M."/>
            <person name="Bloecker H."/>
            <person name="Bauersachs S."/>
            <person name="Blum H."/>
            <person name="Lauber J."/>
            <person name="Duesterhoeft A."/>
            <person name="Beyer A."/>
            <person name="Koehrer K."/>
            <person name="Strack N."/>
            <person name="Mewes H.-W."/>
            <person name="Ottenwaelder B."/>
            <person name="Obermaier B."/>
            <person name="Tampe J."/>
            <person name="Heubner D."/>
            <person name="Wambutt R."/>
            <person name="Korn B."/>
            <person name="Klein M."/>
            <person name="Poustka A."/>
        </authorList>
    </citation>
    <scope>NUCLEOTIDE SEQUENCE [LARGE SCALE MRNA] (ISOFORM 1)</scope>
    <source>
        <tissue>Uterus</tissue>
    </source>
</reference>
<reference key="2">
    <citation type="journal article" date="2004" name="Nat. Genet.">
        <title>Complete sequencing and characterization of 21,243 full-length human cDNAs.</title>
        <authorList>
            <person name="Ota T."/>
            <person name="Suzuki Y."/>
            <person name="Nishikawa T."/>
            <person name="Otsuki T."/>
            <person name="Sugiyama T."/>
            <person name="Irie R."/>
            <person name="Wakamatsu A."/>
            <person name="Hayashi K."/>
            <person name="Sato H."/>
            <person name="Nagai K."/>
            <person name="Kimura K."/>
            <person name="Makita H."/>
            <person name="Sekine M."/>
            <person name="Obayashi M."/>
            <person name="Nishi T."/>
            <person name="Shibahara T."/>
            <person name="Tanaka T."/>
            <person name="Ishii S."/>
            <person name="Yamamoto J."/>
            <person name="Saito K."/>
            <person name="Kawai Y."/>
            <person name="Isono Y."/>
            <person name="Nakamura Y."/>
            <person name="Nagahari K."/>
            <person name="Murakami K."/>
            <person name="Yasuda T."/>
            <person name="Iwayanagi T."/>
            <person name="Wagatsuma M."/>
            <person name="Shiratori A."/>
            <person name="Sudo H."/>
            <person name="Hosoiri T."/>
            <person name="Kaku Y."/>
            <person name="Kodaira H."/>
            <person name="Kondo H."/>
            <person name="Sugawara M."/>
            <person name="Takahashi M."/>
            <person name="Kanda K."/>
            <person name="Yokoi T."/>
            <person name="Furuya T."/>
            <person name="Kikkawa E."/>
            <person name="Omura Y."/>
            <person name="Abe K."/>
            <person name="Kamihara K."/>
            <person name="Katsuta N."/>
            <person name="Sato K."/>
            <person name="Tanikawa M."/>
            <person name="Yamazaki M."/>
            <person name="Ninomiya K."/>
            <person name="Ishibashi T."/>
            <person name="Yamashita H."/>
            <person name="Murakawa K."/>
            <person name="Fujimori K."/>
            <person name="Tanai H."/>
            <person name="Kimata M."/>
            <person name="Watanabe M."/>
            <person name="Hiraoka S."/>
            <person name="Chiba Y."/>
            <person name="Ishida S."/>
            <person name="Ono Y."/>
            <person name="Takiguchi S."/>
            <person name="Watanabe S."/>
            <person name="Yosida M."/>
            <person name="Hotuta T."/>
            <person name="Kusano J."/>
            <person name="Kanehori K."/>
            <person name="Takahashi-Fujii A."/>
            <person name="Hara H."/>
            <person name="Tanase T.-O."/>
            <person name="Nomura Y."/>
            <person name="Togiya S."/>
            <person name="Komai F."/>
            <person name="Hara R."/>
            <person name="Takeuchi K."/>
            <person name="Arita M."/>
            <person name="Imose N."/>
            <person name="Musashino K."/>
            <person name="Yuuki H."/>
            <person name="Oshima A."/>
            <person name="Sasaki N."/>
            <person name="Aotsuka S."/>
            <person name="Yoshikawa Y."/>
            <person name="Matsunawa H."/>
            <person name="Ichihara T."/>
            <person name="Shiohata N."/>
            <person name="Sano S."/>
            <person name="Moriya S."/>
            <person name="Momiyama H."/>
            <person name="Satoh N."/>
            <person name="Takami S."/>
            <person name="Terashima Y."/>
            <person name="Suzuki O."/>
            <person name="Nakagawa S."/>
            <person name="Senoh A."/>
            <person name="Mizoguchi H."/>
            <person name="Goto Y."/>
            <person name="Shimizu F."/>
            <person name="Wakebe H."/>
            <person name="Hishigaki H."/>
            <person name="Watanabe T."/>
            <person name="Sugiyama A."/>
            <person name="Takemoto M."/>
            <person name="Kawakami B."/>
            <person name="Yamazaki M."/>
            <person name="Watanabe K."/>
            <person name="Kumagai A."/>
            <person name="Itakura S."/>
            <person name="Fukuzumi Y."/>
            <person name="Fujimori Y."/>
            <person name="Komiyama M."/>
            <person name="Tashiro H."/>
            <person name="Tanigami A."/>
            <person name="Fujiwara T."/>
            <person name="Ono T."/>
            <person name="Yamada K."/>
            <person name="Fujii Y."/>
            <person name="Ozaki K."/>
            <person name="Hirao M."/>
            <person name="Ohmori Y."/>
            <person name="Kawabata A."/>
            <person name="Hikiji T."/>
            <person name="Kobatake N."/>
            <person name="Inagaki H."/>
            <person name="Ikema Y."/>
            <person name="Okamoto S."/>
            <person name="Okitani R."/>
            <person name="Kawakami T."/>
            <person name="Noguchi S."/>
            <person name="Itoh T."/>
            <person name="Shigeta K."/>
            <person name="Senba T."/>
            <person name="Matsumura K."/>
            <person name="Nakajima Y."/>
            <person name="Mizuno T."/>
            <person name="Morinaga M."/>
            <person name="Sasaki M."/>
            <person name="Togashi T."/>
            <person name="Oyama M."/>
            <person name="Hata H."/>
            <person name="Watanabe M."/>
            <person name="Komatsu T."/>
            <person name="Mizushima-Sugano J."/>
            <person name="Satoh T."/>
            <person name="Shirai Y."/>
            <person name="Takahashi Y."/>
            <person name="Nakagawa K."/>
            <person name="Okumura K."/>
            <person name="Nagase T."/>
            <person name="Nomura N."/>
            <person name="Kikuchi H."/>
            <person name="Masuho Y."/>
            <person name="Yamashita R."/>
            <person name="Nakai K."/>
            <person name="Yada T."/>
            <person name="Nakamura Y."/>
            <person name="Ohara O."/>
            <person name="Isogai T."/>
            <person name="Sugano S."/>
        </authorList>
    </citation>
    <scope>NUCLEOTIDE SEQUENCE [LARGE SCALE MRNA] (ISOFORM 2)</scope>
    <source>
        <tissue>Trachea</tissue>
    </source>
</reference>
<reference key="3">
    <citation type="journal article" date="2004" name="Genome Res.">
        <title>The status, quality, and expansion of the NIH full-length cDNA project: the Mammalian Gene Collection (MGC).</title>
        <authorList>
            <consortium name="The MGC Project Team"/>
        </authorList>
    </citation>
    <scope>NUCLEOTIDE SEQUENCE [LARGE SCALE MRNA] (ISOFORMS 1 AND 2)</scope>
    <scope>VARIANT TRP-191</scope>
    <source>
        <tissue>Brain</tissue>
        <tissue>Colon</tissue>
        <tissue>Lung</tissue>
    </source>
</reference>
<reference key="4">
    <citation type="journal article" date="2013" name="Nat. Genet.">
        <title>The nexin-dynein regulatory complex subunit DRC1 is essential for motile cilia function in algae and humans.</title>
        <authorList>
            <person name="Wirschell M."/>
            <person name="Olbrich H."/>
            <person name="Werner C."/>
            <person name="Tritschler D."/>
            <person name="Bower R."/>
            <person name="Sale W.S."/>
            <person name="Loges N.T."/>
            <person name="Pennekamp P."/>
            <person name="Lindberg S."/>
            <person name="Stenram U."/>
            <person name="Carlen B."/>
            <person name="Horak E."/>
            <person name="Kohler G."/>
            <person name="Nurnberg P."/>
            <person name="Nurnberg G."/>
            <person name="Porter M.E."/>
            <person name="Omran H."/>
        </authorList>
    </citation>
    <scope>SUBCELLULAR LOCATION</scope>
</reference>
<reference key="5">
    <citation type="journal article" date="2016" name="Hum. Mutat.">
        <title>Mutations in GAS8, a gene encoding a nexin-dynein regulatory complex subunit, cause primary ciliary dyskinesia with axonemal disorganization.</title>
        <authorList>
            <person name="Jeanson L."/>
            <person name="Thomas L."/>
            <person name="Copin B."/>
            <person name="Coste A."/>
            <person name="Sermet-Gaudelus I."/>
            <person name="Dastot-Le Moal F."/>
            <person name="Duquesnoy P."/>
            <person name="Montantin G."/>
            <person name="Collot N."/>
            <person name="Tissier S."/>
            <person name="Papon J.F."/>
            <person name="Clement A."/>
            <person name="Louis B."/>
            <person name="Escudier E."/>
            <person name="Amselem S."/>
            <person name="Legendre M."/>
        </authorList>
    </citation>
    <scope>SUBCELLULAR LOCATION</scope>
</reference>
<reference key="6">
    <citation type="journal article" date="2021" name="Hum. Mol. Genet.">
        <title>Loss of DRC1 function leads to multiple morphological abnormalities of the sperm flagella and male infertility in human and mouse.</title>
        <authorList>
            <person name="Zhang J."/>
            <person name="He X."/>
            <person name="Wu H."/>
            <person name="Zhang X."/>
            <person name="Yang S."/>
            <person name="Liu C."/>
            <person name="Liu S."/>
            <person name="Hua R."/>
            <person name="Zhou S."/>
            <person name="Zhao S."/>
            <person name="Hu F."/>
            <person name="Zhang J."/>
            <person name="Liu W."/>
            <person name="Cheng H."/>
            <person name="Gao Y."/>
            <person name="Zhang F."/>
            <person name="Cao Y."/>
            <person name="Liu M."/>
        </authorList>
    </citation>
    <scope>INTERACTION WITH DRC1</scope>
</reference>
<gene>
    <name type="primary">DRC3</name>
    <name type="synonym">LRRC48</name>
</gene>
<organism>
    <name type="scientific">Homo sapiens</name>
    <name type="common">Human</name>
    <dbReference type="NCBI Taxonomy" id="9606"/>
    <lineage>
        <taxon>Eukaryota</taxon>
        <taxon>Metazoa</taxon>
        <taxon>Chordata</taxon>
        <taxon>Craniata</taxon>
        <taxon>Vertebrata</taxon>
        <taxon>Euteleostomi</taxon>
        <taxon>Mammalia</taxon>
        <taxon>Eutheria</taxon>
        <taxon>Euarchontoglires</taxon>
        <taxon>Primates</taxon>
        <taxon>Haplorrhini</taxon>
        <taxon>Catarrhini</taxon>
        <taxon>Hominidae</taxon>
        <taxon>Homo</taxon>
    </lineage>
</organism>
<name>DRC3_HUMAN</name>
<keyword id="KW-0002">3D-structure</keyword>
<keyword id="KW-0025">Alternative splicing</keyword>
<keyword id="KW-0966">Cell projection</keyword>
<keyword id="KW-0969">Cilium</keyword>
<keyword id="KW-0175">Coiled coil</keyword>
<keyword id="KW-0963">Cytoplasm</keyword>
<keyword id="KW-0206">Cytoskeleton</keyword>
<keyword id="KW-0282">Flagellum</keyword>
<keyword id="KW-0433">Leucine-rich repeat</keyword>
<keyword id="KW-1267">Proteomics identification</keyword>
<keyword id="KW-1185">Reference proteome</keyword>
<keyword id="KW-0677">Repeat</keyword>
<protein>
    <recommendedName>
        <fullName>Dynein regulatory complex subunit 3</fullName>
    </recommendedName>
    <alternativeName>
        <fullName>Leucine-rich repeat-containing protein 48</fullName>
    </alternativeName>
</protein>
<comment type="function">
    <text evidence="1">Component of the nexin-dynein regulatory complex (N-DRC) a key regulator of ciliary/flagellar motility which maintains the alignment and integrity of the distal axoneme and regulates microtubule sliding in motile axonemes.</text>
</comment>
<comment type="subunit">
    <text evidence="1 2 7">Component of the nexin-dynein regulatory complex (N-DRC). Interacts with DRC1 (PubMed:34169321). Interacts with TCTE1/DRC5 (By similarity). Interacts with DRC7 (By similarity).</text>
</comment>
<comment type="interaction">
    <interactant intactId="EBI-13070008">
        <id>Q9H069</id>
    </interactant>
    <interactant intactId="EBI-10177272">
        <id>P15622-3</id>
        <label>ZNF250</label>
    </interactant>
    <organismsDiffer>false</organismsDiffer>
    <experiments>3</experiments>
</comment>
<comment type="subcellular location">
    <subcellularLocation>
        <location evidence="5">Cytoplasm</location>
        <location evidence="5">Cytoskeleton</location>
        <location evidence="5">Cilium axoneme</location>
    </subcellularLocation>
    <subcellularLocation>
        <location evidence="6">Cell projection</location>
        <location evidence="6">Cilium</location>
    </subcellularLocation>
    <subcellularLocation>
        <location evidence="1">Cytoplasm</location>
        <location evidence="1">Cytoskeleton</location>
        <location evidence="1">Flagellum axoneme</location>
    </subcellularLocation>
    <subcellularLocation>
        <location evidence="2">Cell projection</location>
        <location evidence="2">Cilium</location>
        <location evidence="2">Flagellum</location>
    </subcellularLocation>
</comment>
<comment type="alternative products">
    <event type="alternative splicing"/>
    <isoform>
        <id>Q9H069-1</id>
        <name>1</name>
        <sequence type="displayed"/>
    </isoform>
    <isoform>
        <id>Q9H069-2</id>
        <name>2</name>
        <sequence type="described" ref="VSP_017578 VSP_017579"/>
    </isoform>
</comment>
<comment type="similarity">
    <text evidence="10">Belongs to the DRC3 family.</text>
</comment>
<proteinExistence type="evidence at protein level"/>